<sequence>MNHYNRTIGSMLILVYSMLAAFLFIDKVFVNIIYFQGMFYTQIFGIPVFLFLNLIIILLCIIVGSVLAYKINQQNDWIKTQIERSMEGETVGINDQNIEIYSETLDLYHTLVPLNQELHKLRLKTQNLTNENYNINDVKVKKIIEDERQRLARELHDSVSQQLFAASMMLSAIKETKLEPPLDQQIPILEKMVQDSQLEMRALLLHLRPLGLKDKSLGEGIKDLVIDLQKKVPMKVVHEIQDFKVPKGIEDHLFRITQEAISNTLRHSNGTKVTVELFNKDDYLLLRIQDNGKGFNVDEKLEQSYGLKNMRERALEIGATFHIVSLPDSGTRIEVKAPLNKEDSYDD</sequence>
<organism>
    <name type="scientific">Staphylococcus aureus (strain Mu3 / ATCC 700698)</name>
    <dbReference type="NCBI Taxonomy" id="418127"/>
    <lineage>
        <taxon>Bacteria</taxon>
        <taxon>Bacillati</taxon>
        <taxon>Bacillota</taxon>
        <taxon>Bacilli</taxon>
        <taxon>Bacillales</taxon>
        <taxon>Staphylococcaceae</taxon>
        <taxon>Staphylococcus</taxon>
    </lineage>
</organism>
<dbReference type="EC" id="2.7.13.3" evidence="1"/>
<dbReference type="EMBL" id="AB035448">
    <property type="protein sequence ID" value="BAB03324.1"/>
    <property type="molecule type" value="Genomic_DNA"/>
</dbReference>
<dbReference type="EMBL" id="AP009324">
    <property type="protein sequence ID" value="BAF78753.1"/>
    <property type="molecule type" value="Genomic_DNA"/>
</dbReference>
<dbReference type="RefSeq" id="WP_001017146.1">
    <property type="nucleotide sequence ID" value="NC_009782.1"/>
</dbReference>
<dbReference type="SMR" id="Q9KWK8"/>
<dbReference type="KEGG" id="saw:SAHV_1870"/>
<dbReference type="HOGENOM" id="CLU_000445_20_12_9"/>
<dbReference type="GO" id="GO:0005886">
    <property type="term" value="C:plasma membrane"/>
    <property type="evidence" value="ECO:0007669"/>
    <property type="project" value="UniProtKB-SubCell"/>
</dbReference>
<dbReference type="GO" id="GO:0005524">
    <property type="term" value="F:ATP binding"/>
    <property type="evidence" value="ECO:0007669"/>
    <property type="project" value="UniProtKB-KW"/>
</dbReference>
<dbReference type="GO" id="GO:0000155">
    <property type="term" value="F:phosphorelay sensor kinase activity"/>
    <property type="evidence" value="ECO:0007669"/>
    <property type="project" value="InterPro"/>
</dbReference>
<dbReference type="GO" id="GO:0046983">
    <property type="term" value="F:protein dimerization activity"/>
    <property type="evidence" value="ECO:0007669"/>
    <property type="project" value="InterPro"/>
</dbReference>
<dbReference type="CDD" id="cd16917">
    <property type="entry name" value="HATPase_UhpB-NarQ-NarX-like"/>
    <property type="match status" value="1"/>
</dbReference>
<dbReference type="Gene3D" id="1.20.5.1930">
    <property type="match status" value="1"/>
</dbReference>
<dbReference type="Gene3D" id="3.30.565.10">
    <property type="entry name" value="Histidine kinase-like ATPase, C-terminal domain"/>
    <property type="match status" value="1"/>
</dbReference>
<dbReference type="InterPro" id="IPR036890">
    <property type="entry name" value="HATPase_C_sf"/>
</dbReference>
<dbReference type="InterPro" id="IPR017202">
    <property type="entry name" value="LiaS/VraS"/>
</dbReference>
<dbReference type="InterPro" id="IPR050482">
    <property type="entry name" value="Sensor_HK_TwoCompSys"/>
</dbReference>
<dbReference type="InterPro" id="IPR011712">
    <property type="entry name" value="Sig_transdc_His_kin_sub3_dim/P"/>
</dbReference>
<dbReference type="PANTHER" id="PTHR24421">
    <property type="entry name" value="NITRATE/NITRITE SENSOR PROTEIN NARX-RELATED"/>
    <property type="match status" value="1"/>
</dbReference>
<dbReference type="PANTHER" id="PTHR24421:SF37">
    <property type="entry name" value="SENSOR HISTIDINE KINASE NARS"/>
    <property type="match status" value="1"/>
</dbReference>
<dbReference type="Pfam" id="PF02518">
    <property type="entry name" value="HATPase_c"/>
    <property type="match status" value="1"/>
</dbReference>
<dbReference type="Pfam" id="PF07730">
    <property type="entry name" value="HisKA_3"/>
    <property type="match status" value="1"/>
</dbReference>
<dbReference type="PIRSF" id="PIRSF037431">
    <property type="entry name" value="STHK_LiaS"/>
    <property type="match status" value="1"/>
</dbReference>
<dbReference type="SMART" id="SM00387">
    <property type="entry name" value="HATPase_c"/>
    <property type="match status" value="1"/>
</dbReference>
<dbReference type="SUPFAM" id="SSF55874">
    <property type="entry name" value="ATPase domain of HSP90 chaperone/DNA topoisomerase II/histidine kinase"/>
    <property type="match status" value="1"/>
</dbReference>
<evidence type="ECO:0000250" key="1">
    <source>
        <dbReference type="UniProtKB" id="Q99SZ7"/>
    </source>
</evidence>
<evidence type="ECO:0000250" key="2">
    <source>
        <dbReference type="UniProtKB" id="Q9HWA7"/>
    </source>
</evidence>
<evidence type="ECO:0000255" key="3"/>
<evidence type="ECO:0000305" key="4"/>
<accession>Q9KWK8</accession>
<accession>A7X407</accession>
<keyword id="KW-0067">ATP-binding</keyword>
<keyword id="KW-1003">Cell membrane</keyword>
<keyword id="KW-0418">Kinase</keyword>
<keyword id="KW-0472">Membrane</keyword>
<keyword id="KW-0547">Nucleotide-binding</keyword>
<keyword id="KW-0597">Phosphoprotein</keyword>
<keyword id="KW-0808">Transferase</keyword>
<keyword id="KW-0812">Transmembrane</keyword>
<keyword id="KW-1133">Transmembrane helix</keyword>
<keyword id="KW-0902">Two-component regulatory system</keyword>
<comment type="function">
    <text evidence="2">Member of the two-component regulatory system PprA/PprB involved in biofilm formation by controlling the expression of many related genes including type IVb pili major subunit flp pilin, adhesin bapA or cupE fimbriae. Also modulates quorum-sensing signal production acting on both negative and positive modulators. Functions as a heme sensor histidine kinase which is autophosphorylated at a histidine residue and transfers its phosphate group to PprB.</text>
</comment>
<comment type="catalytic activity">
    <reaction evidence="1">
        <text>ATP + protein L-histidine = ADP + protein N-phospho-L-histidine.</text>
        <dbReference type="EC" id="2.7.13.3"/>
    </reaction>
</comment>
<comment type="subcellular location">
    <subcellularLocation>
        <location evidence="4">Cell membrane</location>
        <topology evidence="4">Multi-pass membrane protein</topology>
    </subcellularLocation>
</comment>
<comment type="PTM">
    <text evidence="1">Autophosphorylated on His-156.</text>
</comment>
<proteinExistence type="inferred from homology"/>
<gene>
    <name type="primary">vraS</name>
    <name type="ordered locus">SAHV_1870</name>
</gene>
<feature type="chain" id="PRO_0000074898" description="Sensor protein VraS">
    <location>
        <begin position="1"/>
        <end position="347"/>
    </location>
</feature>
<feature type="transmembrane region" description="Helical" evidence="3">
    <location>
        <begin position="13"/>
        <end position="33"/>
    </location>
</feature>
<feature type="transmembrane region" description="Helical" evidence="3">
    <location>
        <begin position="43"/>
        <end position="63"/>
    </location>
</feature>
<feature type="domain" description="Histidine kinase">
    <location>
        <begin position="150"/>
        <end position="341"/>
    </location>
</feature>
<feature type="modified residue" description="Phosphohistidine" evidence="1">
    <location>
        <position position="156"/>
    </location>
</feature>
<name>VRAS_STAA1</name>
<reference key="1">
    <citation type="journal article" date="2000" name="Biochem. Biophys. Res. Commun.">
        <title>Identification of the up- and down-regulated genes in vancomycin-resistant Staphylococcus aureus strains Mu3 and Mu50 by cDNA differential hybridization method.</title>
        <authorList>
            <person name="Kuroda M."/>
            <person name="Kuwahara-Arai K."/>
            <person name="Hiramatsu K."/>
        </authorList>
    </citation>
    <scope>NUCLEOTIDE SEQUENCE [GENOMIC DNA]</scope>
    <scope>FUNCTION</scope>
</reference>
<reference key="2">
    <citation type="journal article" date="2008" name="Antimicrob. Agents Chemother.">
        <title>Mutated response regulator graR is responsible for phenotypic conversion of Staphylococcus aureus from heterogeneous vancomycin-intermediate resistance to vancomycin-intermediate resistance.</title>
        <authorList>
            <person name="Neoh H.-M."/>
            <person name="Cui L."/>
            <person name="Yuzawa H."/>
            <person name="Takeuchi F."/>
            <person name="Matsuo M."/>
            <person name="Hiramatsu K."/>
        </authorList>
    </citation>
    <scope>NUCLEOTIDE SEQUENCE [LARGE SCALE GENOMIC DNA]</scope>
    <source>
        <strain>Mu3 / ATCC 700698</strain>
    </source>
</reference>
<protein>
    <recommendedName>
        <fullName>Sensor protein VraS</fullName>
        <ecNumber evidence="1">2.7.13.3</ecNumber>
    </recommendedName>
</protein>